<organism>
    <name type="scientific">Synechocystis sp. (strain ATCC 27184 / PCC 6803 / Kazusa)</name>
    <dbReference type="NCBI Taxonomy" id="1111708"/>
    <lineage>
        <taxon>Bacteria</taxon>
        <taxon>Bacillati</taxon>
        <taxon>Cyanobacteriota</taxon>
        <taxon>Cyanophyceae</taxon>
        <taxon>Synechococcales</taxon>
        <taxon>Merismopediaceae</taxon>
        <taxon>Synechocystis</taxon>
    </lineage>
</organism>
<gene>
    <name type="ordered locus">slr0272</name>
</gene>
<name>Y272_SYNY3</name>
<accession>P73893</accession>
<proteinExistence type="predicted"/>
<feature type="chain" id="PRO_0000157867" description="Uncharacterized protein slr0272">
    <location>
        <begin position="1"/>
        <end position="325"/>
    </location>
</feature>
<feature type="transmembrane region" description="Helical" evidence="1">
    <location>
        <begin position="67"/>
        <end position="87"/>
    </location>
</feature>
<dbReference type="EMBL" id="BA000022">
    <property type="protein sequence ID" value="BAA17957.1"/>
    <property type="molecule type" value="Genomic_DNA"/>
</dbReference>
<dbReference type="PIR" id="S75095">
    <property type="entry name" value="S75095"/>
</dbReference>
<dbReference type="SMR" id="P73893"/>
<dbReference type="IntAct" id="P73893">
    <property type="interactions" value="1"/>
</dbReference>
<dbReference type="STRING" id="1148.gene:10498826"/>
<dbReference type="PaxDb" id="1148-1653040"/>
<dbReference type="EnsemblBacteria" id="BAA17957">
    <property type="protein sequence ID" value="BAA17957"/>
    <property type="gene ID" value="BAA17957"/>
</dbReference>
<dbReference type="KEGG" id="syn:slr0272"/>
<dbReference type="eggNOG" id="ENOG50342ZZ">
    <property type="taxonomic scope" value="Bacteria"/>
</dbReference>
<dbReference type="InParanoid" id="P73893"/>
<dbReference type="Proteomes" id="UP000001425">
    <property type="component" value="Chromosome"/>
</dbReference>
<dbReference type="GO" id="GO:0016020">
    <property type="term" value="C:membrane"/>
    <property type="evidence" value="ECO:0007669"/>
    <property type="project" value="UniProtKB-SubCell"/>
</dbReference>
<protein>
    <recommendedName>
        <fullName>Uncharacterized protein slr0272</fullName>
    </recommendedName>
</protein>
<evidence type="ECO:0000255" key="1"/>
<evidence type="ECO:0000305" key="2"/>
<keyword id="KW-0472">Membrane</keyword>
<keyword id="KW-1185">Reference proteome</keyword>
<keyword id="KW-0812">Transmembrane</keyword>
<keyword id="KW-1133">Transmembrane helix</keyword>
<sequence>MTTPVFCTNCGNRLSPQVRFCESCGCPVALTSEPPSFSGPPLSPLPPPPPTFNVDEVPSHKRGVTPWIPFFLLFSSVVVLGGLWWLGAFNLPQWNQWLVKILPTNTSSPVVTSPTPTVAPVDANAVSLEDFVGVWMVMEGAPGEGGEAIFTMSLEGNVIVVEAEGDRVEFPTLNGRKLEGSVVEDGVTIPITVELNQNKDQIIVTVLPPNSELQVGVGQRVKGIDDLDSPSNSRDNSLNIDENVLTERQALELLIAWPEIADWMQRVQQEAPQNQTLLEIVETTPQQYLIRAYESVNNPGEPGHTATFGWYNVDRQTGEVTQSIP</sequence>
<comment type="subcellular location">
    <subcellularLocation>
        <location evidence="2">Membrane</location>
        <topology evidence="2">Single-pass membrane protein</topology>
    </subcellularLocation>
</comment>
<reference key="1">
    <citation type="journal article" date="1996" name="DNA Res.">
        <title>Sequence analysis of the genome of the unicellular cyanobacterium Synechocystis sp. strain PCC6803. II. Sequence determination of the entire genome and assignment of potential protein-coding regions.</title>
        <authorList>
            <person name="Kaneko T."/>
            <person name="Sato S."/>
            <person name="Kotani H."/>
            <person name="Tanaka A."/>
            <person name="Asamizu E."/>
            <person name="Nakamura Y."/>
            <person name="Miyajima N."/>
            <person name="Hirosawa M."/>
            <person name="Sugiura M."/>
            <person name="Sasamoto S."/>
            <person name="Kimura T."/>
            <person name="Hosouchi T."/>
            <person name="Matsuno A."/>
            <person name="Muraki A."/>
            <person name="Nakazaki N."/>
            <person name="Naruo K."/>
            <person name="Okumura S."/>
            <person name="Shimpo S."/>
            <person name="Takeuchi C."/>
            <person name="Wada T."/>
            <person name="Watanabe A."/>
            <person name="Yamada M."/>
            <person name="Yasuda M."/>
            <person name="Tabata S."/>
        </authorList>
    </citation>
    <scope>NUCLEOTIDE SEQUENCE [LARGE SCALE GENOMIC DNA]</scope>
    <source>
        <strain>ATCC 27184 / PCC 6803 / Kazusa</strain>
    </source>
</reference>